<name>KCY_CHLTE</name>
<protein>
    <recommendedName>
        <fullName evidence="1">Cytidylate kinase</fullName>
        <shortName evidence="1">CK</shortName>
        <ecNumber evidence="1">2.7.4.25</ecNumber>
    </recommendedName>
    <alternativeName>
        <fullName evidence="1">Cytidine monophosphate kinase</fullName>
        <shortName evidence="1">CMP kinase</shortName>
    </alternativeName>
</protein>
<dbReference type="EC" id="2.7.4.25" evidence="1"/>
<dbReference type="EMBL" id="AE006470">
    <property type="protein sequence ID" value="AAM71532.1"/>
    <property type="molecule type" value="Genomic_DNA"/>
</dbReference>
<dbReference type="RefSeq" id="NP_661190.1">
    <property type="nucleotide sequence ID" value="NC_002932.3"/>
</dbReference>
<dbReference type="RefSeq" id="WP_010931978.1">
    <property type="nucleotide sequence ID" value="NC_002932.3"/>
</dbReference>
<dbReference type="SMR" id="Q8KFN6"/>
<dbReference type="STRING" id="194439.CT0286"/>
<dbReference type="EnsemblBacteria" id="AAM71532">
    <property type="protein sequence ID" value="AAM71532"/>
    <property type="gene ID" value="CT0286"/>
</dbReference>
<dbReference type="KEGG" id="cte:CT0286"/>
<dbReference type="PATRIC" id="fig|194439.7.peg.278"/>
<dbReference type="eggNOG" id="COG0283">
    <property type="taxonomic scope" value="Bacteria"/>
</dbReference>
<dbReference type="HOGENOM" id="CLU_079959_0_0_10"/>
<dbReference type="OrthoDB" id="9807434at2"/>
<dbReference type="Proteomes" id="UP000001007">
    <property type="component" value="Chromosome"/>
</dbReference>
<dbReference type="GO" id="GO:0005829">
    <property type="term" value="C:cytosol"/>
    <property type="evidence" value="ECO:0007669"/>
    <property type="project" value="TreeGrafter"/>
</dbReference>
<dbReference type="GO" id="GO:0005524">
    <property type="term" value="F:ATP binding"/>
    <property type="evidence" value="ECO:0007669"/>
    <property type="project" value="UniProtKB-UniRule"/>
</dbReference>
<dbReference type="GO" id="GO:0036430">
    <property type="term" value="F:CMP kinase activity"/>
    <property type="evidence" value="ECO:0007669"/>
    <property type="project" value="RHEA"/>
</dbReference>
<dbReference type="GO" id="GO:0036431">
    <property type="term" value="F:dCMP kinase activity"/>
    <property type="evidence" value="ECO:0007669"/>
    <property type="project" value="RHEA"/>
</dbReference>
<dbReference type="GO" id="GO:0015949">
    <property type="term" value="P:nucleobase-containing small molecule interconversion"/>
    <property type="evidence" value="ECO:0007669"/>
    <property type="project" value="TreeGrafter"/>
</dbReference>
<dbReference type="GO" id="GO:0006220">
    <property type="term" value="P:pyrimidine nucleotide metabolic process"/>
    <property type="evidence" value="ECO:0007669"/>
    <property type="project" value="UniProtKB-UniRule"/>
</dbReference>
<dbReference type="CDD" id="cd02020">
    <property type="entry name" value="CMPK"/>
    <property type="match status" value="1"/>
</dbReference>
<dbReference type="Gene3D" id="3.40.50.300">
    <property type="entry name" value="P-loop containing nucleotide triphosphate hydrolases"/>
    <property type="match status" value="1"/>
</dbReference>
<dbReference type="HAMAP" id="MF_00238">
    <property type="entry name" value="Cytidyl_kinase_type1"/>
    <property type="match status" value="1"/>
</dbReference>
<dbReference type="InterPro" id="IPR003136">
    <property type="entry name" value="Cytidylate_kin"/>
</dbReference>
<dbReference type="InterPro" id="IPR011994">
    <property type="entry name" value="Cytidylate_kinase_dom"/>
</dbReference>
<dbReference type="InterPro" id="IPR027417">
    <property type="entry name" value="P-loop_NTPase"/>
</dbReference>
<dbReference type="NCBIfam" id="TIGR00017">
    <property type="entry name" value="cmk"/>
    <property type="match status" value="1"/>
</dbReference>
<dbReference type="PANTHER" id="PTHR21299:SF2">
    <property type="entry name" value="CYTIDYLATE KINASE"/>
    <property type="match status" value="1"/>
</dbReference>
<dbReference type="PANTHER" id="PTHR21299">
    <property type="entry name" value="CYTIDYLATE KINASE/PANTOATE-BETA-ALANINE LIGASE"/>
    <property type="match status" value="1"/>
</dbReference>
<dbReference type="Pfam" id="PF02224">
    <property type="entry name" value="Cytidylate_kin"/>
    <property type="match status" value="1"/>
</dbReference>
<dbReference type="SUPFAM" id="SSF52540">
    <property type="entry name" value="P-loop containing nucleoside triphosphate hydrolases"/>
    <property type="match status" value="1"/>
</dbReference>
<keyword id="KW-0067">ATP-binding</keyword>
<keyword id="KW-0963">Cytoplasm</keyword>
<keyword id="KW-0418">Kinase</keyword>
<keyword id="KW-0547">Nucleotide-binding</keyword>
<keyword id="KW-1185">Reference proteome</keyword>
<keyword id="KW-0808">Transferase</keyword>
<reference key="1">
    <citation type="journal article" date="2002" name="Proc. Natl. Acad. Sci. U.S.A.">
        <title>The complete genome sequence of Chlorobium tepidum TLS, a photosynthetic, anaerobic, green-sulfur bacterium.</title>
        <authorList>
            <person name="Eisen J.A."/>
            <person name="Nelson K.E."/>
            <person name="Paulsen I.T."/>
            <person name="Heidelberg J.F."/>
            <person name="Wu M."/>
            <person name="Dodson R.J."/>
            <person name="DeBoy R.T."/>
            <person name="Gwinn M.L."/>
            <person name="Nelson W.C."/>
            <person name="Haft D.H."/>
            <person name="Hickey E.K."/>
            <person name="Peterson J.D."/>
            <person name="Durkin A.S."/>
            <person name="Kolonay J.F."/>
            <person name="Yang F."/>
            <person name="Holt I.E."/>
            <person name="Umayam L.A."/>
            <person name="Mason T.M."/>
            <person name="Brenner M."/>
            <person name="Shea T.P."/>
            <person name="Parksey D.S."/>
            <person name="Nierman W.C."/>
            <person name="Feldblyum T.V."/>
            <person name="Hansen C.L."/>
            <person name="Craven M.B."/>
            <person name="Radune D."/>
            <person name="Vamathevan J.J."/>
            <person name="Khouri H.M."/>
            <person name="White O."/>
            <person name="Gruber T.M."/>
            <person name="Ketchum K.A."/>
            <person name="Venter J.C."/>
            <person name="Tettelin H."/>
            <person name="Bryant D.A."/>
            <person name="Fraser C.M."/>
        </authorList>
    </citation>
    <scope>NUCLEOTIDE SEQUENCE [LARGE SCALE GENOMIC DNA]</scope>
    <source>
        <strain>ATCC 49652 / DSM 12025 / NBRC 103806 / TLS</strain>
    </source>
</reference>
<organism>
    <name type="scientific">Chlorobaculum tepidum (strain ATCC 49652 / DSM 12025 / NBRC 103806 / TLS)</name>
    <name type="common">Chlorobium tepidum</name>
    <dbReference type="NCBI Taxonomy" id="194439"/>
    <lineage>
        <taxon>Bacteria</taxon>
        <taxon>Pseudomonadati</taxon>
        <taxon>Chlorobiota</taxon>
        <taxon>Chlorobiia</taxon>
        <taxon>Chlorobiales</taxon>
        <taxon>Chlorobiaceae</taxon>
        <taxon>Chlorobaculum</taxon>
    </lineage>
</organism>
<evidence type="ECO:0000255" key="1">
    <source>
        <dbReference type="HAMAP-Rule" id="MF_00238"/>
    </source>
</evidence>
<proteinExistence type="inferred from homology"/>
<gene>
    <name evidence="1" type="primary">cmk</name>
    <name type="ordered locus">CT0286</name>
</gene>
<sequence>MESPIEKKPIIVAIDGPAASGKSTTAKILAARLGYTYIDTGAMYRSVTLKVLREGLLDEIRKDETRIAELLQTITIGFQGQRVFLDGEDVSEAIRENRVSREVSFISSLKPVRDKLRELQQEMGRKRGIVMDGRDIGTVIFPDAELKIFLIADPAERAKRRHAELLLKAGGAAVPSVEALEEEIKQRDRDDEQRTHAPLKRHPDAVLLDTSNMTIDEQVNVVYDLVNKIVEQQSL</sequence>
<feature type="chain" id="PRO_0000131901" description="Cytidylate kinase">
    <location>
        <begin position="1"/>
        <end position="235"/>
    </location>
</feature>
<feature type="binding site" evidence="1">
    <location>
        <begin position="16"/>
        <end position="24"/>
    </location>
    <ligand>
        <name>ATP</name>
        <dbReference type="ChEBI" id="CHEBI:30616"/>
    </ligand>
</feature>
<accession>Q8KFN6</accession>
<comment type="catalytic activity">
    <reaction evidence="1">
        <text>CMP + ATP = CDP + ADP</text>
        <dbReference type="Rhea" id="RHEA:11600"/>
        <dbReference type="ChEBI" id="CHEBI:30616"/>
        <dbReference type="ChEBI" id="CHEBI:58069"/>
        <dbReference type="ChEBI" id="CHEBI:60377"/>
        <dbReference type="ChEBI" id="CHEBI:456216"/>
        <dbReference type="EC" id="2.7.4.25"/>
    </reaction>
</comment>
<comment type="catalytic activity">
    <reaction evidence="1">
        <text>dCMP + ATP = dCDP + ADP</text>
        <dbReference type="Rhea" id="RHEA:25094"/>
        <dbReference type="ChEBI" id="CHEBI:30616"/>
        <dbReference type="ChEBI" id="CHEBI:57566"/>
        <dbReference type="ChEBI" id="CHEBI:58593"/>
        <dbReference type="ChEBI" id="CHEBI:456216"/>
        <dbReference type="EC" id="2.7.4.25"/>
    </reaction>
</comment>
<comment type="subcellular location">
    <subcellularLocation>
        <location evidence="1">Cytoplasm</location>
    </subcellularLocation>
</comment>
<comment type="similarity">
    <text evidence="1">Belongs to the cytidylate kinase family. Type 1 subfamily.</text>
</comment>